<organism>
    <name type="scientific">Actinobacillus pleuropneumoniae serotype 3 (strain JL03)</name>
    <dbReference type="NCBI Taxonomy" id="434271"/>
    <lineage>
        <taxon>Bacteria</taxon>
        <taxon>Pseudomonadati</taxon>
        <taxon>Pseudomonadota</taxon>
        <taxon>Gammaproteobacteria</taxon>
        <taxon>Pasteurellales</taxon>
        <taxon>Pasteurellaceae</taxon>
        <taxon>Actinobacillus</taxon>
    </lineage>
</organism>
<accession>B0BRF3</accession>
<name>RS20_ACTPJ</name>
<gene>
    <name evidence="1" type="primary">rpsT</name>
    <name type="ordered locus">APJL_1586</name>
</gene>
<sequence length="87" mass="9534">MANIKSAKKRAVQSEKRRQHNASQRSMMRTFIKKVYAAVAAGDKAASQAAFVEMQKVVDRMASKGLIHANKAANHKAKLAAQIKKLA</sequence>
<comment type="function">
    <text evidence="1">Binds directly to 16S ribosomal RNA.</text>
</comment>
<comment type="similarity">
    <text evidence="1">Belongs to the bacterial ribosomal protein bS20 family.</text>
</comment>
<dbReference type="EMBL" id="CP000687">
    <property type="protein sequence ID" value="ABY70138.1"/>
    <property type="molecule type" value="Genomic_DNA"/>
</dbReference>
<dbReference type="RefSeq" id="WP_005619152.1">
    <property type="nucleotide sequence ID" value="NC_010278.1"/>
</dbReference>
<dbReference type="SMR" id="B0BRF3"/>
<dbReference type="GeneID" id="92743658"/>
<dbReference type="KEGG" id="apj:APJL_1586"/>
<dbReference type="HOGENOM" id="CLU_160655_4_0_6"/>
<dbReference type="Proteomes" id="UP000008547">
    <property type="component" value="Chromosome"/>
</dbReference>
<dbReference type="GO" id="GO:0005829">
    <property type="term" value="C:cytosol"/>
    <property type="evidence" value="ECO:0007669"/>
    <property type="project" value="TreeGrafter"/>
</dbReference>
<dbReference type="GO" id="GO:0015935">
    <property type="term" value="C:small ribosomal subunit"/>
    <property type="evidence" value="ECO:0007669"/>
    <property type="project" value="TreeGrafter"/>
</dbReference>
<dbReference type="GO" id="GO:0070181">
    <property type="term" value="F:small ribosomal subunit rRNA binding"/>
    <property type="evidence" value="ECO:0007669"/>
    <property type="project" value="TreeGrafter"/>
</dbReference>
<dbReference type="GO" id="GO:0003735">
    <property type="term" value="F:structural constituent of ribosome"/>
    <property type="evidence" value="ECO:0007669"/>
    <property type="project" value="InterPro"/>
</dbReference>
<dbReference type="GO" id="GO:0006412">
    <property type="term" value="P:translation"/>
    <property type="evidence" value="ECO:0007669"/>
    <property type="project" value="UniProtKB-UniRule"/>
</dbReference>
<dbReference type="FunFam" id="1.20.58.110:FF:000001">
    <property type="entry name" value="30S ribosomal protein S20"/>
    <property type="match status" value="1"/>
</dbReference>
<dbReference type="Gene3D" id="1.20.58.110">
    <property type="entry name" value="Ribosomal protein S20"/>
    <property type="match status" value="1"/>
</dbReference>
<dbReference type="HAMAP" id="MF_00500">
    <property type="entry name" value="Ribosomal_bS20"/>
    <property type="match status" value="1"/>
</dbReference>
<dbReference type="InterPro" id="IPR002583">
    <property type="entry name" value="Ribosomal_bS20"/>
</dbReference>
<dbReference type="InterPro" id="IPR036510">
    <property type="entry name" value="Ribosomal_bS20_sf"/>
</dbReference>
<dbReference type="NCBIfam" id="TIGR00029">
    <property type="entry name" value="S20"/>
    <property type="match status" value="1"/>
</dbReference>
<dbReference type="PANTHER" id="PTHR33398">
    <property type="entry name" value="30S RIBOSOMAL PROTEIN S20"/>
    <property type="match status" value="1"/>
</dbReference>
<dbReference type="PANTHER" id="PTHR33398:SF1">
    <property type="entry name" value="SMALL RIBOSOMAL SUBUNIT PROTEIN BS20C"/>
    <property type="match status" value="1"/>
</dbReference>
<dbReference type="Pfam" id="PF01649">
    <property type="entry name" value="Ribosomal_S20p"/>
    <property type="match status" value="1"/>
</dbReference>
<dbReference type="SUPFAM" id="SSF46992">
    <property type="entry name" value="Ribosomal protein S20"/>
    <property type="match status" value="1"/>
</dbReference>
<reference key="1">
    <citation type="journal article" date="2008" name="PLoS ONE">
        <title>Genome biology of Actinobacillus pleuropneumoniae JL03, an isolate of serotype 3 prevalent in China.</title>
        <authorList>
            <person name="Xu Z."/>
            <person name="Zhou Y."/>
            <person name="Li L."/>
            <person name="Zhou R."/>
            <person name="Xiao S."/>
            <person name="Wan Y."/>
            <person name="Zhang S."/>
            <person name="Wang K."/>
            <person name="Li W."/>
            <person name="Li L."/>
            <person name="Jin H."/>
            <person name="Kang M."/>
            <person name="Dalai B."/>
            <person name="Li T."/>
            <person name="Liu L."/>
            <person name="Cheng Y."/>
            <person name="Zhang L."/>
            <person name="Xu T."/>
            <person name="Zheng H."/>
            <person name="Pu S."/>
            <person name="Wang B."/>
            <person name="Gu W."/>
            <person name="Zhang X.L."/>
            <person name="Zhu G.-F."/>
            <person name="Wang S."/>
            <person name="Zhao G.-P."/>
            <person name="Chen H."/>
        </authorList>
    </citation>
    <scope>NUCLEOTIDE SEQUENCE [LARGE SCALE GENOMIC DNA]</scope>
    <source>
        <strain>JL03</strain>
    </source>
</reference>
<feature type="chain" id="PRO_1000126390" description="Small ribosomal subunit protein bS20">
    <location>
        <begin position="1"/>
        <end position="87"/>
    </location>
</feature>
<feature type="region of interest" description="Disordered" evidence="2">
    <location>
        <begin position="1"/>
        <end position="26"/>
    </location>
</feature>
<feature type="compositionally biased region" description="Basic residues" evidence="2">
    <location>
        <begin position="1"/>
        <end position="11"/>
    </location>
</feature>
<protein>
    <recommendedName>
        <fullName evidence="1">Small ribosomal subunit protein bS20</fullName>
    </recommendedName>
    <alternativeName>
        <fullName evidence="3">30S ribosomal protein S20</fullName>
    </alternativeName>
</protein>
<proteinExistence type="inferred from homology"/>
<evidence type="ECO:0000255" key="1">
    <source>
        <dbReference type="HAMAP-Rule" id="MF_00500"/>
    </source>
</evidence>
<evidence type="ECO:0000256" key="2">
    <source>
        <dbReference type="SAM" id="MobiDB-lite"/>
    </source>
</evidence>
<evidence type="ECO:0000305" key="3"/>
<keyword id="KW-0687">Ribonucleoprotein</keyword>
<keyword id="KW-0689">Ribosomal protein</keyword>
<keyword id="KW-0694">RNA-binding</keyword>
<keyword id="KW-0699">rRNA-binding</keyword>